<sequence>MASRLLARSKALALALSRADAAAPGPAAGVQWLRTLSSLPRDPAAAASPAPAPRQPAVGSPLGLSKIPGYEQTSRLSGTQVLPRWFSTGTSNGSSAQQEGATRKVMAFSPLEASIAKPRKGPLTSESWKVKQTELLTRSTYYMIPTLLLVSKNSISTSLLVASVFHQVYMFYKEILLDYVHHDITRKWVFIYFKILLIIMAKETVVYFDLF</sequence>
<feature type="transit peptide" description="Mitochondrion" evidence="3">
    <location>
        <begin position="1"/>
        <end position="36"/>
    </location>
</feature>
<feature type="chain" id="PRO_0000431750" description="Succinate dehydrogenase subunit 4, mitochondrial" evidence="3">
    <location>
        <begin position="37"/>
        <end position="211"/>
    </location>
</feature>
<feature type="transmembrane region" description="Helical" evidence="3">
    <location>
        <begin position="188"/>
        <end position="210"/>
    </location>
</feature>
<feature type="region of interest" description="Disordered" evidence="4">
    <location>
        <begin position="41"/>
        <end position="64"/>
    </location>
</feature>
<feature type="binding site" description="axial binding residue" evidence="1">
    <location>
        <position position="166"/>
    </location>
    <ligand>
        <name>heme</name>
        <dbReference type="ChEBI" id="CHEBI:30413"/>
        <note>ligand shared with second transmembrane subunit</note>
    </ligand>
    <ligandPart>
        <name>Fe</name>
        <dbReference type="ChEBI" id="CHEBI:18248"/>
    </ligandPart>
</feature>
<feature type="binding site" evidence="1">
    <location>
        <position position="179"/>
    </location>
    <ligand>
        <name>a ubiquinone</name>
        <dbReference type="ChEBI" id="CHEBI:16389"/>
    </ligand>
</feature>
<feature type="sequence conflict" description="In Ref. 6; AK069146." evidence="6" ref="6">
    <original>F</original>
    <variation>L</variation>
    <location>
        <position position="108"/>
    </location>
</feature>
<dbReference type="EMBL" id="AF364304">
    <property type="protein sequence ID" value="AAK97388.1"/>
    <property type="status" value="ALT_SEQ"/>
    <property type="molecule type" value="Genomic_DNA"/>
</dbReference>
<dbReference type="EMBL" id="AP003266">
    <property type="protein sequence ID" value="BAB64201.1"/>
    <property type="molecule type" value="Genomic_DNA"/>
</dbReference>
<dbReference type="EMBL" id="AP008207">
    <property type="protein sequence ID" value="BAF07238.1"/>
    <property type="molecule type" value="Genomic_DNA"/>
</dbReference>
<dbReference type="EMBL" id="AP014957">
    <property type="protein sequence ID" value="BAS76097.1"/>
    <property type="molecule type" value="Genomic_DNA"/>
</dbReference>
<dbReference type="EMBL" id="AK069146">
    <property type="status" value="NOT_ANNOTATED_CDS"/>
    <property type="molecule type" value="mRNA"/>
</dbReference>
<dbReference type="RefSeq" id="XP_015619484.1">
    <property type="nucleotide sequence ID" value="XM_015763998.1"/>
</dbReference>
<dbReference type="FunCoup" id="Q942X4">
    <property type="interactions" value="239"/>
</dbReference>
<dbReference type="STRING" id="39947.Q942X4"/>
<dbReference type="PaxDb" id="39947-Q942X4"/>
<dbReference type="EnsemblPlants" id="Os01t0935900-01">
    <property type="protein sequence ID" value="Os01t0935900-01"/>
    <property type="gene ID" value="Os01g0935900"/>
</dbReference>
<dbReference type="Gramene" id="Os01t0935900-01">
    <property type="protein sequence ID" value="Os01t0935900-01"/>
    <property type="gene ID" value="Os01g0935900"/>
</dbReference>
<dbReference type="KEGG" id="dosa:Os01g0935900"/>
<dbReference type="eggNOG" id="ENOG502S1RW">
    <property type="taxonomic scope" value="Eukaryota"/>
</dbReference>
<dbReference type="HOGENOM" id="CLU_086191_0_0_1"/>
<dbReference type="InParanoid" id="Q942X4"/>
<dbReference type="OMA" id="PRWFSAG"/>
<dbReference type="OrthoDB" id="822750at2759"/>
<dbReference type="PlantReactome" id="R-OSA-1119533">
    <property type="pathway name" value="TCA cycle (plant)"/>
</dbReference>
<dbReference type="UniPathway" id="UPA00223"/>
<dbReference type="Proteomes" id="UP000000763">
    <property type="component" value="Chromosome 1"/>
</dbReference>
<dbReference type="Proteomes" id="UP000059680">
    <property type="component" value="Chromosome 1"/>
</dbReference>
<dbReference type="ExpressionAtlas" id="Q942X4">
    <property type="expression patterns" value="baseline and differential"/>
</dbReference>
<dbReference type="GO" id="GO:0005743">
    <property type="term" value="C:mitochondrial inner membrane"/>
    <property type="evidence" value="ECO:0007669"/>
    <property type="project" value="UniProtKB-SubCell"/>
</dbReference>
<dbReference type="GO" id="GO:0045273">
    <property type="term" value="C:respiratory chain complex II (succinate dehydrogenase)"/>
    <property type="evidence" value="ECO:0000314"/>
    <property type="project" value="UniProtKB"/>
</dbReference>
<dbReference type="GO" id="GO:0046872">
    <property type="term" value="F:metal ion binding"/>
    <property type="evidence" value="ECO:0007669"/>
    <property type="project" value="UniProtKB-KW"/>
</dbReference>
<dbReference type="GO" id="GO:0006121">
    <property type="term" value="P:mitochondrial electron transport, succinate to ubiquinone"/>
    <property type="evidence" value="ECO:0007669"/>
    <property type="project" value="InterPro"/>
</dbReference>
<dbReference type="GO" id="GO:0006099">
    <property type="term" value="P:tricarboxylic acid cycle"/>
    <property type="evidence" value="ECO:0007669"/>
    <property type="project" value="UniProtKB-UniPathway"/>
</dbReference>
<dbReference type="InterPro" id="IPR044963">
    <property type="entry name" value="SDH4"/>
</dbReference>
<dbReference type="PANTHER" id="PTHR36358">
    <property type="entry name" value="SUCCINATE DEHYDROGENASE SUBUNIT 4, MITOCHONDRIAL"/>
    <property type="match status" value="1"/>
</dbReference>
<dbReference type="PANTHER" id="PTHR36358:SF2">
    <property type="entry name" value="SUCCINATE DEHYDROGENASE SUBUNIT 4, MITOCHONDRIAL"/>
    <property type="match status" value="1"/>
</dbReference>
<gene>
    <name evidence="6" type="primary">SDH4</name>
    <name evidence="8" type="ordered locus">Os01g0935900</name>
    <name evidence="6" type="ordered locus">LOC_Os01g70980</name>
    <name evidence="7" type="ORF">P0492G09.31</name>
</gene>
<comment type="function">
    <text evidence="2">Membrane-anchoring subunit of succinate dehydrogenase (SDH).</text>
</comment>
<comment type="cofactor">
    <cofactor evidence="2">
        <name>heme</name>
        <dbReference type="ChEBI" id="CHEBI:30413"/>
    </cofactor>
</comment>
<comment type="pathway">
    <text evidence="6">Carbohydrate metabolism; tricarboxylic acid cycle.</text>
</comment>
<comment type="subunit">
    <text evidence="5">Component of complex II composed of eight subunits in plants: four classical SDH subunits SDH1, SDH2, SDH3 and SDH4 (a flavoprotein (FP), an iron-sulfur protein (IP), and a cytochrome b composed of a large and a small subunit.), as well as four subunits unknown in mitochondria from bacteria and heterotrophic eukaryotes.</text>
</comment>
<comment type="subcellular location">
    <subcellularLocation>
        <location evidence="6">Mitochondrion inner membrane</location>
        <topology evidence="3">Single-pass membrane protein</topology>
    </subcellularLocation>
</comment>
<comment type="sequence caution" evidence="6">
    <conflict type="erroneous gene model prediction">
        <sequence resource="EMBL-CDS" id="AAK97388"/>
    </conflict>
</comment>
<organism evidence="9">
    <name type="scientific">Oryza sativa subsp. japonica</name>
    <name type="common">Rice</name>
    <dbReference type="NCBI Taxonomy" id="39947"/>
    <lineage>
        <taxon>Eukaryota</taxon>
        <taxon>Viridiplantae</taxon>
        <taxon>Streptophyta</taxon>
        <taxon>Embryophyta</taxon>
        <taxon>Tracheophyta</taxon>
        <taxon>Spermatophyta</taxon>
        <taxon>Magnoliopsida</taxon>
        <taxon>Liliopsida</taxon>
        <taxon>Poales</taxon>
        <taxon>Poaceae</taxon>
        <taxon>BOP clade</taxon>
        <taxon>Oryzoideae</taxon>
        <taxon>Oryzeae</taxon>
        <taxon>Oryzinae</taxon>
        <taxon>Oryza</taxon>
        <taxon>Oryza sativa</taxon>
    </lineage>
</organism>
<name>SDH4_ORYSJ</name>
<evidence type="ECO:0000250" key="1">
    <source>
        <dbReference type="UniProtKB" id="P0AC44"/>
    </source>
</evidence>
<evidence type="ECO:0000250" key="2">
    <source>
        <dbReference type="UniProtKB" id="P69054"/>
    </source>
</evidence>
<evidence type="ECO:0000255" key="3"/>
<evidence type="ECO:0000256" key="4">
    <source>
        <dbReference type="SAM" id="MobiDB-lite"/>
    </source>
</evidence>
<evidence type="ECO:0000269" key="5">
    <source>
    </source>
</evidence>
<evidence type="ECO:0000305" key="6"/>
<evidence type="ECO:0000312" key="7">
    <source>
        <dbReference type="EMBL" id="BAB64201.1"/>
    </source>
</evidence>
<evidence type="ECO:0000312" key="8">
    <source>
        <dbReference type="EMBL" id="BAF07238.1"/>
    </source>
</evidence>
<evidence type="ECO:0000312" key="9">
    <source>
        <dbReference type="Proteomes" id="UP000059680"/>
    </source>
</evidence>
<reference key="1">
    <citation type="journal article" date="2001" name="Genetics">
        <title>Multiple losses and transfers to the nucleus of two mitochondrial succinate dehydrogenase genes during angiosperm evolution.</title>
        <authorList>
            <person name="Adams K.L."/>
            <person name="Rosenblueth M."/>
            <person name="Qiu Y.L."/>
            <person name="Palmer J.D."/>
        </authorList>
    </citation>
    <scope>NUCLEOTIDE SEQUENCE [GENOMIC DNA]</scope>
</reference>
<reference key="2">
    <citation type="journal article" date="2002" name="Nature">
        <title>The genome sequence and structure of rice chromosome 1.</title>
        <authorList>
            <person name="Sasaki T."/>
            <person name="Matsumoto T."/>
            <person name="Yamamoto K."/>
            <person name="Sakata K."/>
            <person name="Baba T."/>
            <person name="Katayose Y."/>
            <person name="Wu J."/>
            <person name="Niimura Y."/>
            <person name="Cheng Z."/>
            <person name="Nagamura Y."/>
            <person name="Antonio B.A."/>
            <person name="Kanamori H."/>
            <person name="Hosokawa S."/>
            <person name="Masukawa M."/>
            <person name="Arikawa K."/>
            <person name="Chiden Y."/>
            <person name="Hayashi M."/>
            <person name="Okamoto M."/>
            <person name="Ando T."/>
            <person name="Aoki H."/>
            <person name="Arita K."/>
            <person name="Hamada M."/>
            <person name="Harada C."/>
            <person name="Hijishita S."/>
            <person name="Honda M."/>
            <person name="Ichikawa Y."/>
            <person name="Idonuma A."/>
            <person name="Iijima M."/>
            <person name="Ikeda M."/>
            <person name="Ikeno M."/>
            <person name="Ito S."/>
            <person name="Ito T."/>
            <person name="Ito Y."/>
            <person name="Ito Y."/>
            <person name="Iwabuchi A."/>
            <person name="Kamiya K."/>
            <person name="Karasawa W."/>
            <person name="Katagiri S."/>
            <person name="Kikuta A."/>
            <person name="Kobayashi N."/>
            <person name="Kono I."/>
            <person name="Machita K."/>
            <person name="Maehara T."/>
            <person name="Mizuno H."/>
            <person name="Mizubayashi T."/>
            <person name="Mukai Y."/>
            <person name="Nagasaki H."/>
            <person name="Nakashima M."/>
            <person name="Nakama Y."/>
            <person name="Nakamichi Y."/>
            <person name="Nakamura M."/>
            <person name="Namiki N."/>
            <person name="Negishi M."/>
            <person name="Ohta I."/>
            <person name="Ono N."/>
            <person name="Saji S."/>
            <person name="Sakai K."/>
            <person name="Shibata M."/>
            <person name="Shimokawa T."/>
            <person name="Shomura A."/>
            <person name="Song J."/>
            <person name="Takazaki Y."/>
            <person name="Terasawa K."/>
            <person name="Tsuji K."/>
            <person name="Waki K."/>
            <person name="Yamagata H."/>
            <person name="Yamane H."/>
            <person name="Yoshiki S."/>
            <person name="Yoshihara R."/>
            <person name="Yukawa K."/>
            <person name="Zhong H."/>
            <person name="Iwama H."/>
            <person name="Endo T."/>
            <person name="Ito H."/>
            <person name="Hahn J.H."/>
            <person name="Kim H.-I."/>
            <person name="Eun M.-Y."/>
            <person name="Yano M."/>
            <person name="Jiang J."/>
            <person name="Gojobori T."/>
        </authorList>
    </citation>
    <scope>NUCLEOTIDE SEQUENCE [LARGE SCALE GENOMIC DNA]</scope>
    <source>
        <strain>cv. Nipponbare</strain>
    </source>
</reference>
<reference key="3">
    <citation type="journal article" date="2005" name="Nature">
        <title>The map-based sequence of the rice genome.</title>
        <authorList>
            <consortium name="International rice genome sequencing project (IRGSP)"/>
        </authorList>
    </citation>
    <scope>NUCLEOTIDE SEQUENCE [LARGE SCALE GENOMIC DNA]</scope>
    <source>
        <strain>cv. Nipponbare</strain>
    </source>
</reference>
<reference key="4">
    <citation type="journal article" date="2008" name="Nucleic Acids Res.">
        <title>The rice annotation project database (RAP-DB): 2008 update.</title>
        <authorList>
            <consortium name="The rice annotation project (RAP)"/>
        </authorList>
    </citation>
    <scope>GENOME REANNOTATION</scope>
    <source>
        <strain>cv. Nipponbare</strain>
    </source>
</reference>
<reference key="5">
    <citation type="journal article" date="2013" name="Rice">
        <title>Improvement of the Oryza sativa Nipponbare reference genome using next generation sequence and optical map data.</title>
        <authorList>
            <person name="Kawahara Y."/>
            <person name="de la Bastide M."/>
            <person name="Hamilton J.P."/>
            <person name="Kanamori H."/>
            <person name="McCombie W.R."/>
            <person name="Ouyang S."/>
            <person name="Schwartz D.C."/>
            <person name="Tanaka T."/>
            <person name="Wu J."/>
            <person name="Zhou S."/>
            <person name="Childs K.L."/>
            <person name="Davidson R.M."/>
            <person name="Lin H."/>
            <person name="Quesada-Ocampo L."/>
            <person name="Vaillancourt B."/>
            <person name="Sakai H."/>
            <person name="Lee S.S."/>
            <person name="Kim J."/>
            <person name="Numa H."/>
            <person name="Itoh T."/>
            <person name="Buell C.R."/>
            <person name="Matsumoto T."/>
        </authorList>
    </citation>
    <scope>GENOME REANNOTATION</scope>
    <source>
        <strain>cv. Nipponbare</strain>
    </source>
</reference>
<reference key="6">
    <citation type="journal article" date="2003" name="Science">
        <title>Collection, mapping, and annotation of over 28,000 cDNA clones from japonica rice.</title>
        <authorList>
            <consortium name="The rice full-length cDNA consortium"/>
        </authorList>
    </citation>
    <scope>NUCLEOTIDE SEQUENCE [LARGE SCALE MRNA]</scope>
    <source>
        <strain>cv. Nipponbare</strain>
    </source>
</reference>
<reference key="7">
    <citation type="journal article" date="2010" name="Plant Mol. Biol.">
        <title>Functional and composition differences between mitochondrial complex II in Arabidopsis and rice are correlated with the complex genetic history of the enzyme.</title>
        <authorList>
            <person name="Huang S."/>
            <person name="Taylor N.L."/>
            <person name="Narsai R."/>
            <person name="Eubel H."/>
            <person name="Whelan J."/>
            <person name="Millar A.H."/>
        </authorList>
    </citation>
    <scope>IDENTIFICATION BY MASS SPECTROMETRY</scope>
    <scope>SUBUNIT</scope>
</reference>
<proteinExistence type="evidence at protein level"/>
<accession>Q942X4</accession>
<accession>A0A0N7KED3</accession>
<accession>Q946Y2</accession>
<protein>
    <recommendedName>
        <fullName evidence="6">Succinate dehydrogenase subunit 4, mitochondrial</fullName>
    </recommendedName>
</protein>
<keyword id="KW-0249">Electron transport</keyword>
<keyword id="KW-0349">Heme</keyword>
<keyword id="KW-0408">Iron</keyword>
<keyword id="KW-0472">Membrane</keyword>
<keyword id="KW-0479">Metal-binding</keyword>
<keyword id="KW-0496">Mitochondrion</keyword>
<keyword id="KW-0999">Mitochondrion inner membrane</keyword>
<keyword id="KW-1185">Reference proteome</keyword>
<keyword id="KW-0809">Transit peptide</keyword>
<keyword id="KW-0812">Transmembrane</keyword>
<keyword id="KW-1133">Transmembrane helix</keyword>
<keyword id="KW-0813">Transport</keyword>
<keyword id="KW-0816">Tricarboxylic acid cycle</keyword>